<accession>A8A5A9</accession>
<reference key="1">
    <citation type="journal article" date="2008" name="J. Bacteriol.">
        <title>The pangenome structure of Escherichia coli: comparative genomic analysis of E. coli commensal and pathogenic isolates.</title>
        <authorList>
            <person name="Rasko D.A."/>
            <person name="Rosovitz M.J."/>
            <person name="Myers G.S.A."/>
            <person name="Mongodin E.F."/>
            <person name="Fricke W.F."/>
            <person name="Gajer P."/>
            <person name="Crabtree J."/>
            <person name="Sebaihia M."/>
            <person name="Thomson N.R."/>
            <person name="Chaudhuri R."/>
            <person name="Henderson I.R."/>
            <person name="Sperandio V."/>
            <person name="Ravel J."/>
        </authorList>
    </citation>
    <scope>NUCLEOTIDE SEQUENCE [LARGE SCALE GENOMIC DNA]</scope>
    <source>
        <strain>HS</strain>
    </source>
</reference>
<sequence length="117" mass="12770">MDKKSARIRRATRARRKLQELGATRLVVHRTPRHIYAQVIAPNGSEVLVAASTVEKAIAEQLKYTGNKDAAAAVGKAVAERALEKGIKDVSFDRSGFQYHGRVQALADAAREAGLQF</sequence>
<organism>
    <name type="scientific">Escherichia coli O9:H4 (strain HS)</name>
    <dbReference type="NCBI Taxonomy" id="331112"/>
    <lineage>
        <taxon>Bacteria</taxon>
        <taxon>Pseudomonadati</taxon>
        <taxon>Pseudomonadota</taxon>
        <taxon>Gammaproteobacteria</taxon>
        <taxon>Enterobacterales</taxon>
        <taxon>Enterobacteriaceae</taxon>
        <taxon>Escherichia</taxon>
    </lineage>
</organism>
<feature type="chain" id="PRO_1000067639" description="Large ribosomal subunit protein uL18">
    <location>
        <begin position="1"/>
        <end position="117"/>
    </location>
</feature>
<dbReference type="EMBL" id="CP000802">
    <property type="protein sequence ID" value="ABV07713.1"/>
    <property type="molecule type" value="Genomic_DNA"/>
</dbReference>
<dbReference type="RefSeq" id="WP_000358960.1">
    <property type="nucleotide sequence ID" value="NC_009800.1"/>
</dbReference>
<dbReference type="SMR" id="A8A5A9"/>
<dbReference type="GeneID" id="98390426"/>
<dbReference type="KEGG" id="ecx:EcHS_A3498"/>
<dbReference type="HOGENOM" id="CLU_098841_0_1_6"/>
<dbReference type="GO" id="GO:0022625">
    <property type="term" value="C:cytosolic large ribosomal subunit"/>
    <property type="evidence" value="ECO:0007669"/>
    <property type="project" value="TreeGrafter"/>
</dbReference>
<dbReference type="GO" id="GO:0008097">
    <property type="term" value="F:5S rRNA binding"/>
    <property type="evidence" value="ECO:0007669"/>
    <property type="project" value="TreeGrafter"/>
</dbReference>
<dbReference type="GO" id="GO:0003735">
    <property type="term" value="F:structural constituent of ribosome"/>
    <property type="evidence" value="ECO:0007669"/>
    <property type="project" value="InterPro"/>
</dbReference>
<dbReference type="GO" id="GO:0006412">
    <property type="term" value="P:translation"/>
    <property type="evidence" value="ECO:0007669"/>
    <property type="project" value="UniProtKB-UniRule"/>
</dbReference>
<dbReference type="CDD" id="cd00432">
    <property type="entry name" value="Ribosomal_L18_L5e"/>
    <property type="match status" value="1"/>
</dbReference>
<dbReference type="FunFam" id="3.30.420.100:FF:000001">
    <property type="entry name" value="50S ribosomal protein L18"/>
    <property type="match status" value="1"/>
</dbReference>
<dbReference type="Gene3D" id="3.30.420.100">
    <property type="match status" value="1"/>
</dbReference>
<dbReference type="HAMAP" id="MF_01337_B">
    <property type="entry name" value="Ribosomal_uL18_B"/>
    <property type="match status" value="1"/>
</dbReference>
<dbReference type="InterPro" id="IPR004389">
    <property type="entry name" value="Ribosomal_uL18_bac-type"/>
</dbReference>
<dbReference type="InterPro" id="IPR005484">
    <property type="entry name" value="Ribosomal_uL18_bac/euk"/>
</dbReference>
<dbReference type="NCBIfam" id="TIGR00060">
    <property type="entry name" value="L18_bact"/>
    <property type="match status" value="1"/>
</dbReference>
<dbReference type="PANTHER" id="PTHR12899">
    <property type="entry name" value="39S RIBOSOMAL PROTEIN L18, MITOCHONDRIAL"/>
    <property type="match status" value="1"/>
</dbReference>
<dbReference type="PANTHER" id="PTHR12899:SF3">
    <property type="entry name" value="LARGE RIBOSOMAL SUBUNIT PROTEIN UL18M"/>
    <property type="match status" value="1"/>
</dbReference>
<dbReference type="Pfam" id="PF00861">
    <property type="entry name" value="Ribosomal_L18p"/>
    <property type="match status" value="1"/>
</dbReference>
<dbReference type="SUPFAM" id="SSF53137">
    <property type="entry name" value="Translational machinery components"/>
    <property type="match status" value="1"/>
</dbReference>
<keyword id="KW-0687">Ribonucleoprotein</keyword>
<keyword id="KW-0689">Ribosomal protein</keyword>
<keyword id="KW-0694">RNA-binding</keyword>
<keyword id="KW-0699">rRNA-binding</keyword>
<proteinExistence type="inferred from homology"/>
<evidence type="ECO:0000255" key="1">
    <source>
        <dbReference type="HAMAP-Rule" id="MF_01337"/>
    </source>
</evidence>
<evidence type="ECO:0000305" key="2"/>
<name>RL18_ECOHS</name>
<protein>
    <recommendedName>
        <fullName evidence="1">Large ribosomal subunit protein uL18</fullName>
    </recommendedName>
    <alternativeName>
        <fullName evidence="2">50S ribosomal protein L18</fullName>
    </alternativeName>
</protein>
<gene>
    <name evidence="1" type="primary">rplR</name>
    <name type="ordered locus">EcHS_A3498</name>
</gene>
<comment type="function">
    <text evidence="1">This is one of the proteins that bind and probably mediate the attachment of the 5S RNA into the large ribosomal subunit, where it forms part of the central protuberance.</text>
</comment>
<comment type="subunit">
    <text evidence="1">Part of the 50S ribosomal subunit; part of the 5S rRNA/L5/L18/L25 subcomplex. Contacts the 5S and 23S rRNAs.</text>
</comment>
<comment type="similarity">
    <text evidence="1">Belongs to the universal ribosomal protein uL18 family.</text>
</comment>